<dbReference type="EMBL" id="Y15169">
    <property type="protein sequence ID" value="CAA75439.1"/>
    <property type="molecule type" value="Genomic_DNA"/>
</dbReference>
<dbReference type="GO" id="GO:0005634">
    <property type="term" value="C:nucleus"/>
    <property type="evidence" value="ECO:0007669"/>
    <property type="project" value="UniProtKB-SubCell"/>
</dbReference>
<dbReference type="GO" id="GO:0008301">
    <property type="term" value="F:DNA binding, bending"/>
    <property type="evidence" value="ECO:0007669"/>
    <property type="project" value="InterPro"/>
</dbReference>
<dbReference type="GO" id="GO:0045895">
    <property type="term" value="P:positive regulation of mating-type specific transcription, DNA-templated"/>
    <property type="evidence" value="ECO:0007669"/>
    <property type="project" value="InterPro"/>
</dbReference>
<dbReference type="InterPro" id="IPR006856">
    <property type="entry name" value="MATalpha_HMGbox"/>
</dbReference>
<dbReference type="Pfam" id="PF04769">
    <property type="entry name" value="MATalpha_HMGbox"/>
    <property type="match status" value="1"/>
</dbReference>
<dbReference type="PROSITE" id="PS51325">
    <property type="entry name" value="ALPHA_BOX"/>
    <property type="match status" value="1"/>
</dbReference>
<gene>
    <name type="primary">MTA1</name>
</gene>
<name>MTA1_SOREQ</name>
<sequence>MSGVDQIVKKFANLGEGDREAAMKAFLAMMPVSNEPVAEPVRKAPTAKKKVNGFMGFRSNYSPLFSYLPQKMRSPFMTILWQYDPYHNEWDFMCSVYSSIRTDLEEQNVTLQLWIHYAIGQMGLIDRDHYMASFGWRLGQTRNGTTDLFRTAIPMVRRNLQPMNGLCLLIKCLESGLSKHLTNPHPIIAKLQDPSFDMIWINKPPHHQQGHTDQADNSELGMPSLFPGNHAVAAEVDGIANLPLSHRTQQGDFGTEPGFSTQFDTMLDSILENGNHPSNSHYNMSLAMDLPMTG</sequence>
<accession>O13595</accession>
<evidence type="ECO:0000250" key="1">
    <source>
        <dbReference type="UniProtKB" id="P0CY06"/>
    </source>
</evidence>
<evidence type="ECO:0000255" key="2">
    <source>
        <dbReference type="PROSITE-ProRule" id="PRU00655"/>
    </source>
</evidence>
<feature type="chain" id="PRO_0000206022" description="Mating type protein mtA-1">
    <location>
        <begin position="1"/>
        <end position="294"/>
    </location>
</feature>
<feature type="DNA-binding region" description="Alpha box" evidence="2">
    <location>
        <begin position="46"/>
        <end position="101"/>
    </location>
</feature>
<protein>
    <recommendedName>
        <fullName>Mating type protein mtA-1</fullName>
    </recommendedName>
</protein>
<keyword id="KW-0238">DNA-binding</keyword>
<keyword id="KW-0539">Nucleus</keyword>
<keyword id="KW-0804">Transcription</keyword>
<keyword id="KW-0805">Transcription regulation</keyword>
<reference key="1">
    <citation type="submission" date="1997-10" db="EMBL/GenBank/DDBJ databases">
        <authorList>
            <person name="Nixon J.E.G."/>
        </authorList>
    </citation>
    <scope>NUCLEOTIDE SEQUENCE [GENOMIC DNA]</scope>
</reference>
<comment type="function">
    <text evidence="1">Mating type proteins are sequence specific DNA-binding proteins that act as master switches in fungal differentiation by controlling gene expression in a cell type-specific fashion. Transcriptional activator that induces the transcription of alpha-specific genes.</text>
</comment>
<comment type="subcellular location">
    <subcellularLocation>
        <location evidence="2">Nucleus</location>
    </subcellularLocation>
</comment>
<comment type="similarity">
    <text evidence="2">Belongs to the MATALPHA1 family.</text>
</comment>
<organism>
    <name type="scientific">Sordaria equina</name>
    <dbReference type="NCBI Taxonomy" id="68456"/>
    <lineage>
        <taxon>Eukaryota</taxon>
        <taxon>Fungi</taxon>
        <taxon>Dikarya</taxon>
        <taxon>Ascomycota</taxon>
        <taxon>Pezizomycotina</taxon>
        <taxon>Sordariomycetes</taxon>
        <taxon>Sordariomycetidae</taxon>
        <taxon>Sordariales</taxon>
        <taxon>Sordariaceae</taxon>
        <taxon>Sordaria</taxon>
    </lineage>
</organism>
<proteinExistence type="inferred from homology"/>